<comment type="function">
    <text evidence="4">Binds ATP/ADP in vitro. Possesses low ATPase activity but high affinity for microtubules.</text>
</comment>
<comment type="subunit">
    <text evidence="4">Binds microtubules.</text>
</comment>
<comment type="similarity">
    <text evidence="5">Belongs to the TRAFAC class myosin-kinesin ATPase superfamily. Kinesin family. KIN-7 subfamily.</text>
</comment>
<comment type="sequence caution" evidence="7">
    <conflict type="erroneous gene model prediction">
        <sequence resource="EMBL-CDS" id="CAE03025"/>
    </conflict>
</comment>
<feature type="chain" id="PRO_0000436627" description="Kinesin-like protein KIN-7F">
    <location>
        <begin position="1"/>
        <end position="945"/>
    </location>
</feature>
<feature type="domain" description="Kinesin motor" evidence="2">
    <location>
        <begin position="34"/>
        <end position="356"/>
    </location>
</feature>
<feature type="region of interest" description="Disordered" evidence="3">
    <location>
        <begin position="484"/>
        <end position="512"/>
    </location>
</feature>
<feature type="region of interest" description="Disordered" evidence="3">
    <location>
        <begin position="553"/>
        <end position="588"/>
    </location>
</feature>
<feature type="coiled-coil region" evidence="1">
    <location>
        <begin position="365"/>
        <end position="437"/>
    </location>
</feature>
<feature type="compositionally biased region" description="Polar residues" evidence="3">
    <location>
        <begin position="495"/>
        <end position="512"/>
    </location>
</feature>
<feature type="compositionally biased region" description="Polar residues" evidence="3">
    <location>
        <begin position="560"/>
        <end position="587"/>
    </location>
</feature>
<feature type="binding site" evidence="2">
    <location>
        <begin position="120"/>
        <end position="127"/>
    </location>
    <ligand>
        <name>ATP</name>
        <dbReference type="ChEBI" id="CHEBI:30616"/>
    </ligand>
</feature>
<proteinExistence type="evidence at protein level"/>
<gene>
    <name evidence="7" type="primary">KIN7F</name>
    <name evidence="6" type="synonym">K23</name>
    <name evidence="8" type="ordered locus">Os04g0538800</name>
    <name evidence="7" type="ordered locus">LOC_Os04g45580</name>
    <name evidence="12" type="ORF">OsJ_15615</name>
    <name evidence="10" type="ORF">OSJNBa0011L07.1</name>
    <name evidence="11" type="ORF">OSJNBa0091D06.23</name>
    <name evidence="9" type="ORF">OSNPB_040538800</name>
</gene>
<name>KN7F_ORYSJ</name>
<reference key="1">
    <citation type="journal article" date="2002" name="Nature">
        <title>Sequence and analysis of rice chromosome 4.</title>
        <authorList>
            <person name="Feng Q."/>
            <person name="Zhang Y."/>
            <person name="Hao P."/>
            <person name="Wang S."/>
            <person name="Fu G."/>
            <person name="Huang Y."/>
            <person name="Li Y."/>
            <person name="Zhu J."/>
            <person name="Liu Y."/>
            <person name="Hu X."/>
            <person name="Jia P."/>
            <person name="Zhang Y."/>
            <person name="Zhao Q."/>
            <person name="Ying K."/>
            <person name="Yu S."/>
            <person name="Tang Y."/>
            <person name="Weng Q."/>
            <person name="Zhang L."/>
            <person name="Lu Y."/>
            <person name="Mu J."/>
            <person name="Lu Y."/>
            <person name="Zhang L.S."/>
            <person name="Yu Z."/>
            <person name="Fan D."/>
            <person name="Liu X."/>
            <person name="Lu T."/>
            <person name="Li C."/>
            <person name="Wu Y."/>
            <person name="Sun T."/>
            <person name="Lei H."/>
            <person name="Li T."/>
            <person name="Hu H."/>
            <person name="Guan J."/>
            <person name="Wu M."/>
            <person name="Zhang R."/>
            <person name="Zhou B."/>
            <person name="Chen Z."/>
            <person name="Chen L."/>
            <person name="Jin Z."/>
            <person name="Wang R."/>
            <person name="Yin H."/>
            <person name="Cai Z."/>
            <person name="Ren S."/>
            <person name="Lv G."/>
            <person name="Gu W."/>
            <person name="Zhu G."/>
            <person name="Tu Y."/>
            <person name="Jia J."/>
            <person name="Zhang Y."/>
            <person name="Chen J."/>
            <person name="Kang H."/>
            <person name="Chen X."/>
            <person name="Shao C."/>
            <person name="Sun Y."/>
            <person name="Hu Q."/>
            <person name="Zhang X."/>
            <person name="Zhang W."/>
            <person name="Wang L."/>
            <person name="Ding C."/>
            <person name="Sheng H."/>
            <person name="Gu J."/>
            <person name="Chen S."/>
            <person name="Ni L."/>
            <person name="Zhu F."/>
            <person name="Chen W."/>
            <person name="Lan L."/>
            <person name="Lai Y."/>
            <person name="Cheng Z."/>
            <person name="Gu M."/>
            <person name="Jiang J."/>
            <person name="Li J."/>
            <person name="Hong G."/>
            <person name="Xue Y."/>
            <person name="Han B."/>
        </authorList>
    </citation>
    <scope>NUCLEOTIDE SEQUENCE [LARGE SCALE GENOMIC DNA]</scope>
    <source>
        <strain>cv. Nipponbare</strain>
    </source>
</reference>
<reference key="2">
    <citation type="journal article" date="2005" name="Nature">
        <title>The map-based sequence of the rice genome.</title>
        <authorList>
            <consortium name="International rice genome sequencing project (IRGSP)"/>
        </authorList>
    </citation>
    <scope>NUCLEOTIDE SEQUENCE [LARGE SCALE GENOMIC DNA]</scope>
    <source>
        <strain>cv. Nipponbare</strain>
    </source>
</reference>
<reference key="3">
    <citation type="journal article" date="2008" name="Nucleic Acids Res.">
        <title>The rice annotation project database (RAP-DB): 2008 update.</title>
        <authorList>
            <consortium name="The rice annotation project (RAP)"/>
        </authorList>
    </citation>
    <scope>GENOME REANNOTATION</scope>
    <source>
        <strain>cv. Nipponbare</strain>
    </source>
</reference>
<reference key="4">
    <citation type="journal article" date="2013" name="Rice">
        <title>Improvement of the Oryza sativa Nipponbare reference genome using next generation sequence and optical map data.</title>
        <authorList>
            <person name="Kawahara Y."/>
            <person name="de la Bastide M."/>
            <person name="Hamilton J.P."/>
            <person name="Kanamori H."/>
            <person name="McCombie W.R."/>
            <person name="Ouyang S."/>
            <person name="Schwartz D.C."/>
            <person name="Tanaka T."/>
            <person name="Wu J."/>
            <person name="Zhou S."/>
            <person name="Childs K.L."/>
            <person name="Davidson R.M."/>
            <person name="Lin H."/>
            <person name="Quesada-Ocampo L."/>
            <person name="Vaillancourt B."/>
            <person name="Sakai H."/>
            <person name="Lee S.S."/>
            <person name="Kim J."/>
            <person name="Numa H."/>
            <person name="Itoh T."/>
            <person name="Buell C.R."/>
            <person name="Matsumoto T."/>
        </authorList>
    </citation>
    <scope>GENOME REANNOTATION</scope>
    <source>
        <strain>cv. Nipponbare</strain>
    </source>
</reference>
<reference key="5">
    <citation type="journal article" date="2005" name="PLoS Biol.">
        <title>The genomes of Oryza sativa: a history of duplications.</title>
        <authorList>
            <person name="Yu J."/>
            <person name="Wang J."/>
            <person name="Lin W."/>
            <person name="Li S."/>
            <person name="Li H."/>
            <person name="Zhou J."/>
            <person name="Ni P."/>
            <person name="Dong W."/>
            <person name="Hu S."/>
            <person name="Zeng C."/>
            <person name="Zhang J."/>
            <person name="Zhang Y."/>
            <person name="Li R."/>
            <person name="Xu Z."/>
            <person name="Li S."/>
            <person name="Li X."/>
            <person name="Zheng H."/>
            <person name="Cong L."/>
            <person name="Lin L."/>
            <person name="Yin J."/>
            <person name="Geng J."/>
            <person name="Li G."/>
            <person name="Shi J."/>
            <person name="Liu J."/>
            <person name="Lv H."/>
            <person name="Li J."/>
            <person name="Wang J."/>
            <person name="Deng Y."/>
            <person name="Ran L."/>
            <person name="Shi X."/>
            <person name="Wang X."/>
            <person name="Wu Q."/>
            <person name="Li C."/>
            <person name="Ren X."/>
            <person name="Wang J."/>
            <person name="Wang X."/>
            <person name="Li D."/>
            <person name="Liu D."/>
            <person name="Zhang X."/>
            <person name="Ji Z."/>
            <person name="Zhao W."/>
            <person name="Sun Y."/>
            <person name="Zhang Z."/>
            <person name="Bao J."/>
            <person name="Han Y."/>
            <person name="Dong L."/>
            <person name="Ji J."/>
            <person name="Chen P."/>
            <person name="Wu S."/>
            <person name="Liu J."/>
            <person name="Xiao Y."/>
            <person name="Bu D."/>
            <person name="Tan J."/>
            <person name="Yang L."/>
            <person name="Ye C."/>
            <person name="Zhang J."/>
            <person name="Xu J."/>
            <person name="Zhou Y."/>
            <person name="Yu Y."/>
            <person name="Zhang B."/>
            <person name="Zhuang S."/>
            <person name="Wei H."/>
            <person name="Liu B."/>
            <person name="Lei M."/>
            <person name="Yu H."/>
            <person name="Li Y."/>
            <person name="Xu H."/>
            <person name="Wei S."/>
            <person name="He X."/>
            <person name="Fang L."/>
            <person name="Zhang Z."/>
            <person name="Zhang Y."/>
            <person name="Huang X."/>
            <person name="Su Z."/>
            <person name="Tong W."/>
            <person name="Li J."/>
            <person name="Tong Z."/>
            <person name="Li S."/>
            <person name="Ye J."/>
            <person name="Wang L."/>
            <person name="Fang L."/>
            <person name="Lei T."/>
            <person name="Chen C.-S."/>
            <person name="Chen H.-C."/>
            <person name="Xu Z."/>
            <person name="Li H."/>
            <person name="Huang H."/>
            <person name="Zhang F."/>
            <person name="Xu H."/>
            <person name="Li N."/>
            <person name="Zhao C."/>
            <person name="Li S."/>
            <person name="Dong L."/>
            <person name="Huang Y."/>
            <person name="Li L."/>
            <person name="Xi Y."/>
            <person name="Qi Q."/>
            <person name="Li W."/>
            <person name="Zhang B."/>
            <person name="Hu W."/>
            <person name="Zhang Y."/>
            <person name="Tian X."/>
            <person name="Jiao Y."/>
            <person name="Liang X."/>
            <person name="Jin J."/>
            <person name="Gao L."/>
            <person name="Zheng W."/>
            <person name="Hao B."/>
            <person name="Liu S.-M."/>
            <person name="Wang W."/>
            <person name="Yuan L."/>
            <person name="Cao M."/>
            <person name="McDermott J."/>
            <person name="Samudrala R."/>
            <person name="Wang J."/>
            <person name="Wong G.K.-S."/>
            <person name="Yang H."/>
        </authorList>
    </citation>
    <scope>NUCLEOTIDE SEQUENCE [LARGE SCALE GENOMIC DNA]</scope>
    <source>
        <strain>cv. Nipponbare</strain>
    </source>
</reference>
<reference key="6">
    <citation type="journal article" date="2003" name="Science">
        <title>Collection, mapping, and annotation of over 28,000 cDNA clones from japonica rice.</title>
        <authorList>
            <consortium name="The rice full-length cDNA consortium"/>
        </authorList>
    </citation>
    <scope>NUCLEOTIDE SEQUENCE [LARGE SCALE MRNA]</scope>
    <source>
        <strain>cv. Nipponbare</strain>
    </source>
</reference>
<reference key="7">
    <citation type="journal article" date="2009" name="Ann. Bot.">
        <title>Evaluating the microtubule cytoskeleton and its interacting proteins in monocots by mining the rice genome.</title>
        <authorList>
            <person name="Guo L."/>
            <person name="Ho C.M."/>
            <person name="Kong Z."/>
            <person name="Lee Y.R."/>
            <person name="Qian Q."/>
            <person name="Liu B."/>
        </authorList>
    </citation>
    <scope>GENE FAMILY</scope>
    <scope>NOMENCLATURE</scope>
</reference>
<reference key="8">
    <citation type="journal article" date="2011" name="J. Biochem.">
        <title>Biochemical characterization of the novel rice kinesin K23 and its kinetic study using fluorescence resonance energy transfer between an intrinsic tryptophan residue and a fluorescent ATP analogue.</title>
        <authorList>
            <person name="Umezu N."/>
            <person name="Hanzawa N."/>
            <person name="Yamada M.D."/>
            <person name="Kondo K."/>
            <person name="Mitsui T."/>
            <person name="Maruta S."/>
        </authorList>
    </citation>
    <scope>FUNCTION</scope>
    <scope>ATP-BINDING</scope>
    <scope>SUBUNIT</scope>
</reference>
<accession>Q7X7H4</accession>
<accession>Q7FB17</accession>
<dbReference type="EMBL" id="AL606459">
    <property type="protein sequence ID" value="CAE03025.3"/>
    <property type="status" value="ALT_SEQ"/>
    <property type="molecule type" value="Genomic_DNA"/>
</dbReference>
<dbReference type="EMBL" id="AL606587">
    <property type="protein sequence ID" value="CAE02777.2"/>
    <property type="molecule type" value="Genomic_DNA"/>
</dbReference>
<dbReference type="EMBL" id="AP008210">
    <property type="protein sequence ID" value="BAF15347.1"/>
    <property type="molecule type" value="Genomic_DNA"/>
</dbReference>
<dbReference type="EMBL" id="AP014960">
    <property type="protein sequence ID" value="BAS90272.1"/>
    <property type="molecule type" value="Genomic_DNA"/>
</dbReference>
<dbReference type="EMBL" id="CM000141">
    <property type="protein sequence ID" value="EEE61418.1"/>
    <property type="molecule type" value="Genomic_DNA"/>
</dbReference>
<dbReference type="EMBL" id="AK102262">
    <property type="protein sequence ID" value="BAG95469.1"/>
    <property type="molecule type" value="mRNA"/>
</dbReference>
<dbReference type="RefSeq" id="XP_015636528.1">
    <property type="nucleotide sequence ID" value="XM_015781042.1"/>
</dbReference>
<dbReference type="SMR" id="Q7X7H4"/>
<dbReference type="FunCoup" id="Q7X7H4">
    <property type="interactions" value="11"/>
</dbReference>
<dbReference type="STRING" id="39947.Q7X7H4"/>
<dbReference type="iPTMnet" id="Q7X7H4"/>
<dbReference type="PaxDb" id="39947-Q7X7H4"/>
<dbReference type="EnsemblPlants" id="Os04t0538800-01">
    <property type="protein sequence ID" value="Os04t0538800-01"/>
    <property type="gene ID" value="Os04g0538800"/>
</dbReference>
<dbReference type="Gramene" id="Os04t0538800-01">
    <property type="protein sequence ID" value="Os04t0538800-01"/>
    <property type="gene ID" value="Os04g0538800"/>
</dbReference>
<dbReference type="KEGG" id="dosa:Os04g0538800"/>
<dbReference type="eggNOG" id="KOG0242">
    <property type="taxonomic scope" value="Eukaryota"/>
</dbReference>
<dbReference type="HOGENOM" id="CLU_013407_0_0_1"/>
<dbReference type="InParanoid" id="Q7X7H4"/>
<dbReference type="OMA" id="GRPQNCQ"/>
<dbReference type="OrthoDB" id="3176171at2759"/>
<dbReference type="Proteomes" id="UP000000763">
    <property type="component" value="Chromosome 4"/>
</dbReference>
<dbReference type="Proteomes" id="UP000007752">
    <property type="component" value="Chromosome 4"/>
</dbReference>
<dbReference type="Proteomes" id="UP000059680">
    <property type="component" value="Chromosome 4"/>
</dbReference>
<dbReference type="GO" id="GO:0005874">
    <property type="term" value="C:microtubule"/>
    <property type="evidence" value="ECO:0007669"/>
    <property type="project" value="UniProtKB-KW"/>
</dbReference>
<dbReference type="GO" id="GO:0005524">
    <property type="term" value="F:ATP binding"/>
    <property type="evidence" value="ECO:0000314"/>
    <property type="project" value="UniProtKB"/>
</dbReference>
<dbReference type="GO" id="GO:0016887">
    <property type="term" value="F:ATP hydrolysis activity"/>
    <property type="evidence" value="ECO:0000314"/>
    <property type="project" value="UniProtKB"/>
</dbReference>
<dbReference type="GO" id="GO:0008017">
    <property type="term" value="F:microtubule binding"/>
    <property type="evidence" value="ECO:0007669"/>
    <property type="project" value="InterPro"/>
</dbReference>
<dbReference type="GO" id="GO:0003777">
    <property type="term" value="F:microtubule motor activity"/>
    <property type="evidence" value="ECO:0000314"/>
    <property type="project" value="UniProtKB"/>
</dbReference>
<dbReference type="GO" id="GO:0007018">
    <property type="term" value="P:microtubule-based movement"/>
    <property type="evidence" value="ECO:0000314"/>
    <property type="project" value="UniProtKB"/>
</dbReference>
<dbReference type="CDD" id="cd01374">
    <property type="entry name" value="KISc_CENP_E"/>
    <property type="match status" value="1"/>
</dbReference>
<dbReference type="FunFam" id="3.40.850.10:FF:000016">
    <property type="entry name" value="Kinesin-like protein"/>
    <property type="match status" value="1"/>
</dbReference>
<dbReference type="Gene3D" id="3.40.850.10">
    <property type="entry name" value="Kinesin motor domain"/>
    <property type="match status" value="1"/>
</dbReference>
<dbReference type="InterPro" id="IPR027640">
    <property type="entry name" value="Kinesin-like_fam"/>
</dbReference>
<dbReference type="InterPro" id="IPR019821">
    <property type="entry name" value="Kinesin_motor_CS"/>
</dbReference>
<dbReference type="InterPro" id="IPR001752">
    <property type="entry name" value="Kinesin_motor_dom"/>
</dbReference>
<dbReference type="InterPro" id="IPR036961">
    <property type="entry name" value="Kinesin_motor_dom_sf"/>
</dbReference>
<dbReference type="InterPro" id="IPR021881">
    <property type="entry name" value="NACK_C"/>
</dbReference>
<dbReference type="InterPro" id="IPR027417">
    <property type="entry name" value="P-loop_NTPase"/>
</dbReference>
<dbReference type="PANTHER" id="PTHR47968">
    <property type="entry name" value="CENTROMERE PROTEIN E"/>
    <property type="match status" value="1"/>
</dbReference>
<dbReference type="PANTHER" id="PTHR47968:SF18">
    <property type="entry name" value="KINESIN-LIKE PROTEIN KIN-7F"/>
    <property type="match status" value="1"/>
</dbReference>
<dbReference type="Pfam" id="PF11995">
    <property type="entry name" value="DUF3490"/>
    <property type="match status" value="1"/>
</dbReference>
<dbReference type="Pfam" id="PF00225">
    <property type="entry name" value="Kinesin"/>
    <property type="match status" value="1"/>
</dbReference>
<dbReference type="PRINTS" id="PR00380">
    <property type="entry name" value="KINESINHEAVY"/>
</dbReference>
<dbReference type="SMART" id="SM00129">
    <property type="entry name" value="KISc"/>
    <property type="match status" value="1"/>
</dbReference>
<dbReference type="SUPFAM" id="SSF52540">
    <property type="entry name" value="P-loop containing nucleoside triphosphate hydrolases"/>
    <property type="match status" value="1"/>
</dbReference>
<dbReference type="PROSITE" id="PS00411">
    <property type="entry name" value="KINESIN_MOTOR_1"/>
    <property type="match status" value="1"/>
</dbReference>
<dbReference type="PROSITE" id="PS50067">
    <property type="entry name" value="KINESIN_MOTOR_2"/>
    <property type="match status" value="1"/>
</dbReference>
<evidence type="ECO:0000255" key="1"/>
<evidence type="ECO:0000255" key="2">
    <source>
        <dbReference type="PROSITE-ProRule" id="PRU00283"/>
    </source>
</evidence>
<evidence type="ECO:0000256" key="3">
    <source>
        <dbReference type="SAM" id="MobiDB-lite"/>
    </source>
</evidence>
<evidence type="ECO:0000269" key="4">
    <source>
    </source>
</evidence>
<evidence type="ECO:0000303" key="5">
    <source>
    </source>
</evidence>
<evidence type="ECO:0000303" key="6">
    <source>
    </source>
</evidence>
<evidence type="ECO:0000305" key="7"/>
<evidence type="ECO:0000312" key="8">
    <source>
        <dbReference type="EMBL" id="BAF15347.1"/>
    </source>
</evidence>
<evidence type="ECO:0000312" key="9">
    <source>
        <dbReference type="EMBL" id="BAS90272.1"/>
    </source>
</evidence>
<evidence type="ECO:0000312" key="10">
    <source>
        <dbReference type="EMBL" id="CAE02777.2"/>
    </source>
</evidence>
<evidence type="ECO:0000312" key="11">
    <source>
        <dbReference type="EMBL" id="CAE03025.3"/>
    </source>
</evidence>
<evidence type="ECO:0000312" key="12">
    <source>
        <dbReference type="EMBL" id="EEE61418.1"/>
    </source>
</evidence>
<protein>
    <recommendedName>
        <fullName evidence="7">Kinesin-like protein KIN-7F</fullName>
    </recommendedName>
</protein>
<organism>
    <name type="scientific">Oryza sativa subsp. japonica</name>
    <name type="common">Rice</name>
    <dbReference type="NCBI Taxonomy" id="39947"/>
    <lineage>
        <taxon>Eukaryota</taxon>
        <taxon>Viridiplantae</taxon>
        <taxon>Streptophyta</taxon>
        <taxon>Embryophyta</taxon>
        <taxon>Tracheophyta</taxon>
        <taxon>Spermatophyta</taxon>
        <taxon>Magnoliopsida</taxon>
        <taxon>Liliopsida</taxon>
        <taxon>Poales</taxon>
        <taxon>Poaceae</taxon>
        <taxon>BOP clade</taxon>
        <taxon>Oryzoideae</taxon>
        <taxon>Oryzeae</taxon>
        <taxon>Oryzinae</taxon>
        <taxon>Oryza</taxon>
        <taxon>Oryza sativa</taxon>
    </lineage>
</organism>
<sequence>MGAIGGDEVVQWDKMDGGEVVNGGGGGGVGKLERILVSVRLRPLSDKEIARGDPSEWECINDTTIISRSTFPDRPSAPTAYSFDRVFRSDCDTNEVYKQGAKEVALSVVSGINSSIFAYGQTSSGKTYTMTGITEYTVADIYDYIGKHEERAFVLKFSAIEIYNEVVRDLLSAENTPLRLWDDAEKGTYVENLTEVVLRDWNHLKELISVCEAQRKTGETYLNENSSRSHQILKLTIESSAREFLGKDKSTTLVASVNFVDLAGSERASQALSAGARLKEGCHINRSLLTLGTVIRKLSKVRNGHIPYRDSKLTRILQPSLGGNARTAIICTMSPARSHMEQSRNTLLFASCAKEVVTNAQVNVVMSDKALVKQLQKELARLESELRCPASYSSLESLVKEKDNQIRKMEKEIKELKLQRDLAQSRLQDLLQVVGDNHVHVSKQSSVSGRNFTFDVPQTCEDEQSTTESSEVVDSVQNFRFQGRRVAQREHKPQQAENNVQFTTPSRYSVSSPPFSGMLPTNRSDHLSQISNEDSDDICKEVRCIETNETGGNECLESSAVGSNSLQDPNAGSSMHINNDSNSSMNSRLRDESPVTLEQHLENVRKPFANIVKDLGSSTRNSSSSKVLGRSRSCRSLTGSSLFEDLEKDDCTPPNRSFIDFAGRPQNCQRRGSALNYDAESETLSRAGSMLSEITTTRDGLKANSSVAGDTEFTGIGEFVAELKEMAQVQYQKQLGHSGNGDLAEGTIRSVGLDPITDALQSPSRWPLEFEKKQQEIIDFWHACNVSLVHRTYFFLLFKGDPADSIYMEVELRRLSFLKDTYSNGAIASIPNTSLVSSAKKLQREREMLCRQMQRRLSIEERESMYTKWGVSLASKRRRLQVARCLWTETKDLEHVRESASLVARLIGLLEPGKALREMFGLSFAPQQFTRRSYNSWRYGRSSLN</sequence>
<keyword id="KW-0067">ATP-binding</keyword>
<keyword id="KW-0175">Coiled coil</keyword>
<keyword id="KW-0493">Microtubule</keyword>
<keyword id="KW-0505">Motor protein</keyword>
<keyword id="KW-0547">Nucleotide-binding</keyword>
<keyword id="KW-1185">Reference proteome</keyword>